<keyword id="KW-1185">Reference proteome</keyword>
<keyword id="KW-0732">Signal</keyword>
<accession>A8AIB3</accession>
<proteinExistence type="inferred from homology"/>
<dbReference type="EMBL" id="CP000822">
    <property type="protein sequence ID" value="ABV13226.1"/>
    <property type="molecule type" value="Genomic_DNA"/>
</dbReference>
<dbReference type="RefSeq" id="WP_012132958.1">
    <property type="nucleotide sequence ID" value="NC_009792.1"/>
</dbReference>
<dbReference type="STRING" id="290338.CKO_02102"/>
<dbReference type="GeneID" id="45136051"/>
<dbReference type="KEGG" id="cko:CKO_02102"/>
<dbReference type="HOGENOM" id="CLU_073782_2_0_6"/>
<dbReference type="OrthoDB" id="6428208at2"/>
<dbReference type="Proteomes" id="UP000008148">
    <property type="component" value="Chromosome"/>
</dbReference>
<dbReference type="HAMAP" id="MF_00789">
    <property type="entry name" value="UPF0319"/>
    <property type="match status" value="1"/>
</dbReference>
<dbReference type="InterPro" id="IPR018635">
    <property type="entry name" value="UPF0319"/>
</dbReference>
<dbReference type="NCBIfam" id="NF047712">
    <property type="entry name" value="CrliSynInhib"/>
    <property type="match status" value="1"/>
</dbReference>
<dbReference type="NCBIfam" id="NF002967">
    <property type="entry name" value="PRK03641.1"/>
    <property type="match status" value="1"/>
</dbReference>
<dbReference type="PANTHER" id="PTHR38108">
    <property type="entry name" value="UPF0319 PROTEIN YCCT"/>
    <property type="match status" value="1"/>
</dbReference>
<dbReference type="PANTHER" id="PTHR38108:SF1">
    <property type="entry name" value="UPF0319 PROTEIN YCCT"/>
    <property type="match status" value="1"/>
</dbReference>
<dbReference type="Pfam" id="PF09829">
    <property type="entry name" value="DUF2057"/>
    <property type="match status" value="1"/>
</dbReference>
<sequence>MKTGIITMLFVLYLPVTAFATTLRLSNDIDLLVLDGKKVSSSLLRGADSIELDNGPHQLVFRVEKTIRLSSHEERLYISPPLVISFNTQLISQVNFHLPHLETEREAAHFSTTPRLELLDGDAMPIPVKLDILAITSTAKIIDYETETERYNKADKRASLPQFATMMADDSTLLSGISELDAVPPQSQALTEQRLKYWFKQADPQTRNNFLQWAEKQPPS</sequence>
<reference key="1">
    <citation type="submission" date="2007-08" db="EMBL/GenBank/DDBJ databases">
        <authorList>
            <consortium name="The Citrobacter koseri Genome Sequencing Project"/>
            <person name="McClelland M."/>
            <person name="Sanderson E.K."/>
            <person name="Porwollik S."/>
            <person name="Spieth J."/>
            <person name="Clifton W.S."/>
            <person name="Latreille P."/>
            <person name="Courtney L."/>
            <person name="Wang C."/>
            <person name="Pepin K."/>
            <person name="Bhonagiri V."/>
            <person name="Nash W."/>
            <person name="Johnson M."/>
            <person name="Thiruvilangam P."/>
            <person name="Wilson R."/>
        </authorList>
    </citation>
    <scope>NUCLEOTIDE SEQUENCE [LARGE SCALE GENOMIC DNA]</scope>
    <source>
        <strain>ATCC BAA-895 / CDC 4225-83 / SGSC4696</strain>
    </source>
</reference>
<organism>
    <name type="scientific">Citrobacter koseri (strain ATCC BAA-895 / CDC 4225-83 / SGSC4696)</name>
    <dbReference type="NCBI Taxonomy" id="290338"/>
    <lineage>
        <taxon>Bacteria</taxon>
        <taxon>Pseudomonadati</taxon>
        <taxon>Pseudomonadota</taxon>
        <taxon>Gammaproteobacteria</taxon>
        <taxon>Enterobacterales</taxon>
        <taxon>Enterobacteriaceae</taxon>
        <taxon>Citrobacter</taxon>
    </lineage>
</organism>
<evidence type="ECO:0000255" key="1">
    <source>
        <dbReference type="HAMAP-Rule" id="MF_00789"/>
    </source>
</evidence>
<name>Y2102_CITK8</name>
<gene>
    <name type="ordered locus">CKO_02102</name>
</gene>
<protein>
    <recommendedName>
        <fullName evidence="1">UPF0319 protein CKO_02102</fullName>
    </recommendedName>
</protein>
<feature type="signal peptide" evidence="1">
    <location>
        <begin position="1"/>
        <end position="20"/>
    </location>
</feature>
<feature type="chain" id="PRO_1000046897" description="UPF0319 protein CKO_02102">
    <location>
        <begin position="21"/>
        <end position="220"/>
    </location>
</feature>
<comment type="similarity">
    <text evidence="1">Belongs to the UPF0319 family.</text>
</comment>